<comment type="function">
    <text evidence="5 10">Catalyzes the reversible oxidation of 3-phospho-D-glycerate to 3-phosphonooxypyruvate, the first step of the phosphorylated L-serine biosynthesis pathway. Also catalyzes the reversible oxidation of 2-hydroxyglutarate to 2-oxoglutarate and the reversible oxidation of (S)-malate to oxaloacetate.</text>
</comment>
<comment type="catalytic activity">
    <reaction evidence="5">
        <text>(2R)-3-phosphoglycerate + NAD(+) = 3-phosphooxypyruvate + NADH + H(+)</text>
        <dbReference type="Rhea" id="RHEA:12641"/>
        <dbReference type="ChEBI" id="CHEBI:15378"/>
        <dbReference type="ChEBI" id="CHEBI:18110"/>
        <dbReference type="ChEBI" id="CHEBI:57540"/>
        <dbReference type="ChEBI" id="CHEBI:57945"/>
        <dbReference type="ChEBI" id="CHEBI:58272"/>
        <dbReference type="EC" id="1.1.1.95"/>
    </reaction>
</comment>
<comment type="catalytic activity">
    <reaction evidence="10">
        <text>(R)-2-hydroxyglutarate + NAD(+) = 2-oxoglutarate + NADH + H(+)</text>
        <dbReference type="Rhea" id="RHEA:49612"/>
        <dbReference type="ChEBI" id="CHEBI:15378"/>
        <dbReference type="ChEBI" id="CHEBI:15801"/>
        <dbReference type="ChEBI" id="CHEBI:16810"/>
        <dbReference type="ChEBI" id="CHEBI:57540"/>
        <dbReference type="ChEBI" id="CHEBI:57945"/>
        <dbReference type="EC" id="1.1.1.399"/>
    </reaction>
</comment>
<comment type="catalytic activity">
    <reaction evidence="10">
        <text>(S)-malate + NAD(+) = oxaloacetate + NADH + H(+)</text>
        <dbReference type="Rhea" id="RHEA:21432"/>
        <dbReference type="ChEBI" id="CHEBI:15378"/>
        <dbReference type="ChEBI" id="CHEBI:15589"/>
        <dbReference type="ChEBI" id="CHEBI:16452"/>
        <dbReference type="ChEBI" id="CHEBI:57540"/>
        <dbReference type="ChEBI" id="CHEBI:57945"/>
        <dbReference type="EC" id="1.1.1.37"/>
    </reaction>
</comment>
<comment type="biophysicochemical properties">
    <kinetics>
        <KM evidence="8">21.6 uM for 3-phosphonooxypyruvate</KM>
        <KM evidence="10">0.26 mM for 3-phosphoglycerate</KM>
        <KM evidence="10">6.5 mM for oxaloacetate</KM>
        <KM evidence="10">10.1 mM for 2-oxoglutarate</KM>
        <KM evidence="10">22 uM for NAD(+)</KM>
        <KM evidence="10">4 uM for NADH</KM>
        <Vmax evidence="8">35.0 nmol/min/mg enzyme with 3-phosphohydroxypyruvate as substrate (in patient-derived fibroblasts)</Vmax>
        <Vmax evidence="8">168.0 nmol/min/mg enzyme with 3-phosphohydroxypyruvate as substrate (in 3-PGDH overexpressed cells)</Vmax>
        <text evidence="10">kcat is 4.5 min(-1) for 3-phosphoglycerate oxidation. kcat is 10.6 min(-1) for oxaloacetate reduction. kcat is 4.7 min(-1) for 2-oxoglutarate reduction.</text>
    </kinetics>
</comment>
<comment type="pathway">
    <text>Amino-acid biosynthesis; L-serine biosynthesis; L-serine from 3-phospho-D-glycerate: step 1/3.</text>
</comment>
<comment type="subunit">
    <text evidence="2">Homotetramer.</text>
</comment>
<comment type="interaction">
    <interactant intactId="EBI-350495">
        <id>O43175</id>
    </interactant>
    <interactant intactId="EBI-713198">
        <id>Q9Y6I3</id>
        <label>EPN1</label>
    </interactant>
    <organismsDiffer>false</organismsDiffer>
    <experiments>5</experiments>
</comment>
<comment type="induction">
    <text evidence="6 7">Induced by 17-beta-estradiol (estrogenic ligand) and 4-hydroxytamoxifen (agonist/antagonist ligand). Positively regulated by the transcription factors SP1 and NF-Y.</text>
</comment>
<comment type="disease" evidence="4 8">
    <disease id="DI-02161">
        <name>Phosphoglycerate dehydrogenase deficiency</name>
        <acronym>PHGDHD</acronym>
        <description>An autosomal recessive inborn error of L-serine biosynthesis, clinically characterized by congenital microcephaly, psychomotor retardation, and seizures.</description>
        <dbReference type="MIM" id="601815"/>
    </disease>
    <text>The disease is caused by variants affecting the gene represented in this entry.</text>
</comment>
<comment type="disease" evidence="9">
    <disease id="DI-04141">
        <name>Neu-Laxova syndrome 1</name>
        <acronym>NLS1</acronym>
        <description>A lethal, autosomal recessive multiple malformation syndrome characterized by ichthyosis, marked intrauterine growth restriction, microcephaly, short neck, limb deformities, hypoplastic lungs, edema, and central nervous system anomalies including lissencephaly, cerebellar hypoplasia and/or abnormal/agenesis of the corpus callosum. Abnormal facial features include severe proptosis with ectropion, hypertelorism, micrognathia, flattened nose, and malformed ears.</description>
        <dbReference type="MIM" id="256520"/>
    </disease>
    <text>The disease is caused by variants affecting the gene represented in this entry.</text>
</comment>
<comment type="similarity">
    <text evidence="13">Belongs to the D-isomer specific 2-hydroxyacid dehydrogenase family.</text>
</comment>
<evidence type="ECO:0000250" key="1"/>
<evidence type="ECO:0000250" key="2">
    <source>
        <dbReference type="UniProtKB" id="O08651"/>
    </source>
</evidence>
<evidence type="ECO:0000250" key="3">
    <source>
        <dbReference type="UniProtKB" id="Q61753"/>
    </source>
</evidence>
<evidence type="ECO:0000269" key="4">
    <source>
    </source>
</evidence>
<evidence type="ECO:0000269" key="5">
    <source>
    </source>
</evidence>
<evidence type="ECO:0000269" key="6">
    <source>
    </source>
</evidence>
<evidence type="ECO:0000269" key="7">
    <source>
    </source>
</evidence>
<evidence type="ECO:0000269" key="8">
    <source>
    </source>
</evidence>
<evidence type="ECO:0000269" key="9">
    <source>
    </source>
</evidence>
<evidence type="ECO:0000269" key="10">
    <source>
    </source>
</evidence>
<evidence type="ECO:0000269" key="11">
    <source ref="21"/>
</evidence>
<evidence type="ECO:0000269" key="12">
    <source ref="8"/>
</evidence>
<evidence type="ECO:0000305" key="13"/>
<evidence type="ECO:0007744" key="14">
    <source>
    </source>
</evidence>
<evidence type="ECO:0007744" key="15">
    <source>
    </source>
</evidence>
<evidence type="ECO:0007744" key="16">
    <source>
    </source>
</evidence>
<evidence type="ECO:0007829" key="17">
    <source>
        <dbReference type="PDB" id="5NZO"/>
    </source>
</evidence>
<evidence type="ECO:0007829" key="18">
    <source>
        <dbReference type="PDB" id="6PLF"/>
    </source>
</evidence>
<evidence type="ECO:0007829" key="19">
    <source>
        <dbReference type="PDB" id="6RJ3"/>
    </source>
</evidence>
<evidence type="ECO:0007829" key="20">
    <source>
        <dbReference type="PDB" id="6RJ5"/>
    </source>
</evidence>
<evidence type="ECO:0007829" key="21">
    <source>
        <dbReference type="PDB" id="7EWH"/>
    </source>
</evidence>
<sequence length="533" mass="56651">MAFANLRKVLISDSLDPCCRKILQDGGLQVVEKQNLSKEELIAELQDCEGLIVRSATKVTADVINAAEKLQVVGRAGTGVDNVDLEAATRKGILVMNTPNGNSLSAAELTCGMIMCLARQIPQATASMKDGKWERKKFMGTELNGKTLGILGLGRIGREVATRMQSFGMKTIGYDPIISPEVSASFGVQQLPLEEIWPLCDFITVHTPLLPSTTGLLNDNTFAQCKKGVRVVNCARGGIVDEGALLRALQSGQCAGAALDVFTEEPPRDRALVDHENVISCPHLGASTKEAQSRCGEEIAVQFVDMVKGKSLTGVVNAQALTSAFSPHTKPWIGLAEALGTLMRAWAGSPKGTIQVITQGTSLKNAGNCLSPAVIVGLLKEASKQADVNLVNAKLLVKEAGLNVTTSHSPAAPGEQGFGECLLAVALAGAPYQAVGLVQGTTPVLQGLNGAVFRPEVPLRRDLPLLLFRTQTSDPAMLPTMIGLLAEAGVRLLSYQTSLVSDGETWHVMGISSLLPSLEAWKQHVTEAFQFHF</sequence>
<feature type="initiator methionine" description="Removed" evidence="12">
    <location>
        <position position="1"/>
    </location>
</feature>
<feature type="chain" id="PRO_0000076012" description="D-3-phosphoglycerate dehydrogenase">
    <location>
        <begin position="2"/>
        <end position="533"/>
    </location>
</feature>
<feature type="active site">
    <location>
        <position position="236"/>
    </location>
</feature>
<feature type="active site" evidence="1">
    <location>
        <position position="265"/>
    </location>
</feature>
<feature type="active site" description="Proton donor">
    <location>
        <position position="283"/>
    </location>
</feature>
<feature type="binding site" evidence="11">
    <location>
        <position position="78"/>
    </location>
    <ligand>
        <name>NAD(+)</name>
        <dbReference type="ChEBI" id="CHEBI:57540"/>
    </ligand>
</feature>
<feature type="binding site" evidence="11">
    <location>
        <begin position="155"/>
        <end position="156"/>
    </location>
    <ligand>
        <name>NAD(+)</name>
        <dbReference type="ChEBI" id="CHEBI:57540"/>
    </ligand>
</feature>
<feature type="binding site" evidence="11">
    <location>
        <position position="175"/>
    </location>
    <ligand>
        <name>NAD(+)</name>
        <dbReference type="ChEBI" id="CHEBI:57540"/>
    </ligand>
</feature>
<feature type="binding site" evidence="11">
    <location>
        <position position="207"/>
    </location>
    <ligand>
        <name>NAD(+)</name>
        <dbReference type="ChEBI" id="CHEBI:57540"/>
    </ligand>
</feature>
<feature type="binding site" evidence="11">
    <location>
        <begin position="234"/>
        <end position="236"/>
    </location>
    <ligand>
        <name>NAD(+)</name>
        <dbReference type="ChEBI" id="CHEBI:57540"/>
    </ligand>
</feature>
<feature type="binding site" evidence="11">
    <location>
        <position position="260"/>
    </location>
    <ligand>
        <name>NAD(+)</name>
        <dbReference type="ChEBI" id="CHEBI:57540"/>
    </ligand>
</feature>
<feature type="binding site" evidence="11">
    <location>
        <begin position="283"/>
        <end position="286"/>
    </location>
    <ligand>
        <name>NAD(+)</name>
        <dbReference type="ChEBI" id="CHEBI:57540"/>
    </ligand>
</feature>
<feature type="modified residue" description="N-acetylalanine" evidence="12">
    <location>
        <position position="2"/>
    </location>
</feature>
<feature type="modified residue" description="Phosphoserine" evidence="15">
    <location>
        <position position="14"/>
    </location>
</feature>
<feature type="modified residue" description="N6-acetyllysine; alternate" evidence="3">
    <location>
        <position position="21"/>
    </location>
</feature>
<feature type="modified residue" description="N6-acetyllysine" evidence="3">
    <location>
        <position position="58"/>
    </location>
</feature>
<feature type="modified residue" description="Phosphothreonine" evidence="14 15">
    <location>
        <position position="78"/>
    </location>
</feature>
<feature type="cross-link" description="Glycyl lysine isopeptide (Lys-Gly) (interchain with G-Cter in SUMO1); alternate" evidence="16">
    <location>
        <position position="21"/>
    </location>
</feature>
<feature type="cross-link" description="Glycyl lysine isopeptide (Lys-Gly) (interchain with G-Cter in SUMO2); alternate" evidence="16">
    <location>
        <position position="21"/>
    </location>
</feature>
<feature type="sequence variant" id="VAR_059026" description="In PHGDHD; results in a 2-fold decrease in enzyme activity with 3-phosphohydroxypyruvate, but no change in substrate affinity; dbSNP:rs267606949." evidence="8">
    <original>R</original>
    <variation>W</variation>
    <location>
        <position position="135"/>
    </location>
</feature>
<feature type="sequence variant" id="VAR_071819" description="In NLS1; dbSNP:rs587777770." evidence="9">
    <original>G</original>
    <variation>R</variation>
    <location>
        <position position="140"/>
    </location>
</feature>
<feature type="sequence variant" id="VAR_071820" description="In NLS1; dbSNP:rs587777483." evidence="9">
    <original>R</original>
    <variation>Q</variation>
    <location>
        <position position="163"/>
    </location>
</feature>
<feature type="sequence variant" id="VAR_059027" description="In PHGDHD; results in a four-fold decrease in substrate affinity and a slight increase in maximal enzyme activity with 3-phosphohydroxypyruvate; dbSNP:rs267606947." evidence="8">
    <original>V</original>
    <variation>M</variation>
    <location>
        <position position="261"/>
    </location>
</feature>
<feature type="sequence variant" id="VAR_059028" description="In PHGDHD; results in almost undetectable enzyme activity with 3-phosphohydroxypyruvate; dbSNP:rs201553627." evidence="8">
    <original>A</original>
    <variation>T</variation>
    <location>
        <position position="373"/>
    </location>
</feature>
<feature type="sequence variant" id="VAR_059029" description="In PHGDHD; results in a 2-fold decrease in enzyme activity with 3-phosphohydroxypyruvate, but no change in substrate affinity; dbSNP:rs267606948." evidence="8">
    <original>G</original>
    <variation>S</variation>
    <location>
        <position position="377"/>
    </location>
</feature>
<feature type="sequence variant" id="VAR_013461" description="In PHGDHD; results in almost undetectable enzyme activity with 3-phosphohydroxypyruvate; dbSNP:rs121907988." evidence="4 8">
    <original>V</original>
    <variation>M</variation>
    <location>
        <position position="425"/>
    </location>
</feature>
<feature type="sequence variant" id="VAR_059030" description="In PHGDHD; results in almost undetectable enzyme activity with 3-phosphohydroxypyruvate; dbSNP:rs121907987." evidence="4 5 8">
    <original>V</original>
    <variation>M</variation>
    <location>
        <position position="490"/>
    </location>
</feature>
<feature type="sequence conflict" description="In Ref. 1; AAB88664/AAD51415." evidence="13" ref="1">
    <original>D</original>
    <variation>E</variation>
    <location>
        <position position="25"/>
    </location>
</feature>
<feature type="strand" evidence="19">
    <location>
        <begin position="8"/>
        <end position="11"/>
    </location>
</feature>
<feature type="helix" evidence="19">
    <location>
        <begin position="18"/>
        <end position="25"/>
    </location>
</feature>
<feature type="strand" evidence="19">
    <location>
        <begin position="29"/>
        <end position="32"/>
    </location>
</feature>
<feature type="helix" evidence="19">
    <location>
        <begin position="38"/>
        <end position="45"/>
    </location>
</feature>
<feature type="strand" evidence="19">
    <location>
        <begin position="49"/>
        <end position="53"/>
    </location>
</feature>
<feature type="strand" evidence="19">
    <location>
        <begin position="55"/>
        <end position="57"/>
    </location>
</feature>
<feature type="helix" evidence="19">
    <location>
        <begin position="61"/>
        <end position="66"/>
    </location>
</feature>
<feature type="strand" evidence="19">
    <location>
        <begin position="72"/>
        <end position="78"/>
    </location>
</feature>
<feature type="strand" evidence="20">
    <location>
        <begin position="81"/>
        <end position="83"/>
    </location>
</feature>
<feature type="helix" evidence="19">
    <location>
        <begin position="85"/>
        <end position="90"/>
    </location>
</feature>
<feature type="strand" evidence="19">
    <location>
        <begin position="94"/>
        <end position="96"/>
    </location>
</feature>
<feature type="helix" evidence="19">
    <location>
        <begin position="99"/>
        <end position="102"/>
    </location>
</feature>
<feature type="helix" evidence="17">
    <location>
        <begin position="103"/>
        <end position="119"/>
    </location>
</feature>
<feature type="helix" evidence="17">
    <location>
        <begin position="121"/>
        <end position="129"/>
    </location>
</feature>
<feature type="turn" evidence="17">
    <location>
        <begin position="135"/>
        <end position="138"/>
    </location>
</feature>
<feature type="strand" evidence="17">
    <location>
        <begin position="147"/>
        <end position="151"/>
    </location>
</feature>
<feature type="helix" evidence="17">
    <location>
        <begin position="155"/>
        <end position="165"/>
    </location>
</feature>
<feature type="turn" evidence="17">
    <location>
        <begin position="166"/>
        <end position="168"/>
    </location>
</feature>
<feature type="strand" evidence="17">
    <location>
        <begin position="170"/>
        <end position="174"/>
    </location>
</feature>
<feature type="strand" evidence="17">
    <location>
        <begin position="176"/>
        <end position="178"/>
    </location>
</feature>
<feature type="helix" evidence="17">
    <location>
        <begin position="180"/>
        <end position="185"/>
    </location>
</feature>
<feature type="strand" evidence="18">
    <location>
        <begin position="188"/>
        <end position="190"/>
    </location>
</feature>
<feature type="helix" evidence="17">
    <location>
        <begin position="193"/>
        <end position="196"/>
    </location>
</feature>
<feature type="helix" evidence="17">
    <location>
        <begin position="197"/>
        <end position="199"/>
    </location>
</feature>
<feature type="strand" evidence="17">
    <location>
        <begin position="201"/>
        <end position="205"/>
    </location>
</feature>
<feature type="helix" evidence="17">
    <location>
        <begin position="211"/>
        <end position="213"/>
    </location>
</feature>
<feature type="strand" evidence="17">
    <location>
        <begin position="216"/>
        <end position="218"/>
    </location>
</feature>
<feature type="helix" evidence="17">
    <location>
        <begin position="219"/>
        <end position="222"/>
    </location>
</feature>
<feature type="strand" evidence="17">
    <location>
        <begin position="229"/>
        <end position="233"/>
    </location>
</feature>
<feature type="helix" evidence="17">
    <location>
        <begin position="242"/>
        <end position="251"/>
    </location>
</feature>
<feature type="strand" evidence="17">
    <location>
        <begin position="252"/>
        <end position="260"/>
    </location>
</feature>
<feature type="strand" evidence="17">
    <location>
        <begin position="263"/>
        <end position="266"/>
    </location>
</feature>
<feature type="helix" evidence="17">
    <location>
        <begin position="271"/>
        <end position="274"/>
    </location>
</feature>
<feature type="strand" evidence="17">
    <location>
        <begin position="278"/>
        <end position="280"/>
    </location>
</feature>
<feature type="helix" evidence="17">
    <location>
        <begin position="289"/>
        <end position="292"/>
    </location>
</feature>
<feature type="turn" evidence="21">
    <location>
        <begin position="304"/>
        <end position="306"/>
    </location>
</feature>
<accession>O43175</accession>
<accession>B2RD08</accession>
<accession>Q5SZU3</accession>
<accession>Q9BQ01</accession>
<dbReference type="EC" id="1.1.1.95" evidence="5"/>
<dbReference type="EC" id="1.1.1.399" evidence="10"/>
<dbReference type="EC" id="1.1.1.37" evidence="10"/>
<dbReference type="EMBL" id="AF006043">
    <property type="protein sequence ID" value="AAB88664.1"/>
    <property type="molecule type" value="mRNA"/>
</dbReference>
<dbReference type="EMBL" id="AF171237">
    <property type="protein sequence ID" value="AAD51415.1"/>
    <property type="molecule type" value="mRNA"/>
</dbReference>
<dbReference type="EMBL" id="CR456795">
    <property type="protein sequence ID" value="CAG33076.1"/>
    <property type="molecule type" value="mRNA"/>
</dbReference>
<dbReference type="EMBL" id="AK315360">
    <property type="protein sequence ID" value="BAG37755.1"/>
    <property type="molecule type" value="mRNA"/>
</dbReference>
<dbReference type="EMBL" id="AL589734">
    <property type="status" value="NOT_ANNOTATED_CDS"/>
    <property type="molecule type" value="Genomic_DNA"/>
</dbReference>
<dbReference type="EMBL" id="AL139251">
    <property type="status" value="NOT_ANNOTATED_CDS"/>
    <property type="molecule type" value="Genomic_DNA"/>
</dbReference>
<dbReference type="EMBL" id="CH471122">
    <property type="protein sequence ID" value="EAW56708.1"/>
    <property type="molecule type" value="Genomic_DNA"/>
</dbReference>
<dbReference type="EMBL" id="BC000303">
    <property type="protein sequence ID" value="AAH00303.1"/>
    <property type="molecule type" value="mRNA"/>
</dbReference>
<dbReference type="EMBL" id="BC001349">
    <property type="protein sequence ID" value="AAH01349.1"/>
    <property type="molecule type" value="mRNA"/>
</dbReference>
<dbReference type="EMBL" id="BC011262">
    <property type="protein sequence ID" value="AAH11262.1"/>
    <property type="molecule type" value="mRNA"/>
</dbReference>
<dbReference type="CCDS" id="CCDS904.1"/>
<dbReference type="RefSeq" id="NP_006614.2">
    <property type="nucleotide sequence ID" value="NM_006623.3"/>
</dbReference>
<dbReference type="PDB" id="2G76">
    <property type="method" value="X-ray"/>
    <property type="resolution" value="1.70 A"/>
    <property type="chains" value="A/B=4-315"/>
</dbReference>
<dbReference type="PDB" id="5N53">
    <property type="method" value="X-ray"/>
    <property type="resolution" value="1.48 A"/>
    <property type="chains" value="A/B=100-294"/>
</dbReference>
<dbReference type="PDB" id="5N6C">
    <property type="method" value="X-ray"/>
    <property type="resolution" value="2.30 A"/>
    <property type="chains" value="A/B=8-306"/>
</dbReference>
<dbReference type="PDB" id="5NZO">
    <property type="method" value="X-ray"/>
    <property type="resolution" value="1.29 A"/>
    <property type="chains" value="A/B=100-294"/>
</dbReference>
<dbReference type="PDB" id="5NZP">
    <property type="method" value="X-ray"/>
    <property type="resolution" value="1.30 A"/>
    <property type="chains" value="A/B=96-299"/>
</dbReference>
<dbReference type="PDB" id="5NZQ">
    <property type="method" value="X-ray"/>
    <property type="resolution" value="1.50 A"/>
    <property type="chains" value="A/B=93-315"/>
</dbReference>
<dbReference type="PDB" id="5OFM">
    <property type="method" value="X-ray"/>
    <property type="resolution" value="1.50 A"/>
    <property type="chains" value="A/B=93-315"/>
</dbReference>
<dbReference type="PDB" id="5OFV">
    <property type="method" value="X-ray"/>
    <property type="resolution" value="1.50 A"/>
    <property type="chains" value="A/B=93-315"/>
</dbReference>
<dbReference type="PDB" id="5OFW">
    <property type="method" value="X-ray"/>
    <property type="resolution" value="1.50 A"/>
    <property type="chains" value="A/B=93-315"/>
</dbReference>
<dbReference type="PDB" id="6CWA">
    <property type="method" value="X-ray"/>
    <property type="resolution" value="1.77 A"/>
    <property type="chains" value="A/B=4-315"/>
</dbReference>
<dbReference type="PDB" id="6PLF">
    <property type="method" value="X-ray"/>
    <property type="resolution" value="1.70 A"/>
    <property type="chains" value="A/B=4-315"/>
</dbReference>
<dbReference type="PDB" id="6PLG">
    <property type="method" value="X-ray"/>
    <property type="resolution" value="2.93 A"/>
    <property type="chains" value="A/B/C/D/E/F/G/H=4-315"/>
</dbReference>
<dbReference type="PDB" id="6RIH">
    <property type="method" value="X-ray"/>
    <property type="resolution" value="2.15 A"/>
    <property type="chains" value="A/B=4-315"/>
</dbReference>
<dbReference type="PDB" id="6RJ2">
    <property type="method" value="X-ray"/>
    <property type="resolution" value="2.00 A"/>
    <property type="chains" value="A/B=4-315"/>
</dbReference>
<dbReference type="PDB" id="6RJ3">
    <property type="method" value="X-ray"/>
    <property type="resolution" value="1.42 A"/>
    <property type="chains" value="A/B=4-315"/>
</dbReference>
<dbReference type="PDB" id="6RJ5">
    <property type="method" value="X-ray"/>
    <property type="resolution" value="1.89 A"/>
    <property type="chains" value="A/B=4-315"/>
</dbReference>
<dbReference type="PDB" id="6RJ6">
    <property type="method" value="X-ray"/>
    <property type="resolution" value="1.98 A"/>
    <property type="chains" value="A/B=4-315"/>
</dbReference>
<dbReference type="PDB" id="7CVP">
    <property type="method" value="X-ray"/>
    <property type="resolution" value="2.50 A"/>
    <property type="chains" value="A/B=4-315"/>
</dbReference>
<dbReference type="PDB" id="7DKM">
    <property type="method" value="X-ray"/>
    <property type="resolution" value="1.70 A"/>
    <property type="chains" value="A/B=3-308"/>
</dbReference>
<dbReference type="PDB" id="7EWH">
    <property type="method" value="X-ray"/>
    <property type="resolution" value="2.99 A"/>
    <property type="chains" value="A/B=6-307"/>
</dbReference>
<dbReference type="PDB" id="7VA1">
    <property type="method" value="X-ray"/>
    <property type="resolution" value="1.74 A"/>
    <property type="chains" value="A/B/C/D=96-307"/>
</dbReference>
<dbReference type="PDBsum" id="2G76"/>
<dbReference type="PDBsum" id="5N53"/>
<dbReference type="PDBsum" id="5N6C"/>
<dbReference type="PDBsum" id="5NZO"/>
<dbReference type="PDBsum" id="5NZP"/>
<dbReference type="PDBsum" id="5NZQ"/>
<dbReference type="PDBsum" id="5OFM"/>
<dbReference type="PDBsum" id="5OFV"/>
<dbReference type="PDBsum" id="5OFW"/>
<dbReference type="PDBsum" id="6CWA"/>
<dbReference type="PDBsum" id="6PLF"/>
<dbReference type="PDBsum" id="6PLG"/>
<dbReference type="PDBsum" id="6RIH"/>
<dbReference type="PDBsum" id="6RJ2"/>
<dbReference type="PDBsum" id="6RJ3"/>
<dbReference type="PDBsum" id="6RJ5"/>
<dbReference type="PDBsum" id="6RJ6"/>
<dbReference type="PDBsum" id="7CVP"/>
<dbReference type="PDBsum" id="7DKM"/>
<dbReference type="PDBsum" id="7EWH"/>
<dbReference type="PDBsum" id="7VA1"/>
<dbReference type="SMR" id="O43175"/>
<dbReference type="BioGRID" id="117618">
    <property type="interactions" value="396"/>
</dbReference>
<dbReference type="CORUM" id="O43175"/>
<dbReference type="FunCoup" id="O43175">
    <property type="interactions" value="1090"/>
</dbReference>
<dbReference type="IntAct" id="O43175">
    <property type="interactions" value="116"/>
</dbReference>
<dbReference type="MINT" id="O43175"/>
<dbReference type="STRING" id="9606.ENSP00000493382"/>
<dbReference type="BindingDB" id="O43175"/>
<dbReference type="ChEMBL" id="CHEMBL2311243"/>
<dbReference type="DrugBank" id="DB00157">
    <property type="generic name" value="NADH"/>
</dbReference>
<dbReference type="CarbonylDB" id="O43175"/>
<dbReference type="GlyGen" id="O43175">
    <property type="glycosylation" value="5 sites, 1 O-linked glycan (5 sites)"/>
</dbReference>
<dbReference type="iPTMnet" id="O43175"/>
<dbReference type="MetOSite" id="O43175"/>
<dbReference type="PhosphoSitePlus" id="O43175"/>
<dbReference type="SwissPalm" id="O43175"/>
<dbReference type="BioMuta" id="PHGDH"/>
<dbReference type="CPTAC" id="CPTAC-109"/>
<dbReference type="CPTAC" id="CPTAC-110"/>
<dbReference type="CPTAC" id="CPTAC-2768"/>
<dbReference type="CPTAC" id="CPTAC-2769"/>
<dbReference type="CPTAC" id="CPTAC-2770"/>
<dbReference type="CPTAC" id="CPTAC-2771"/>
<dbReference type="CPTAC" id="CPTAC-2772"/>
<dbReference type="jPOST" id="O43175"/>
<dbReference type="MassIVE" id="O43175"/>
<dbReference type="PaxDb" id="9606-ENSP00000358417"/>
<dbReference type="PeptideAtlas" id="O43175"/>
<dbReference type="ProteomicsDB" id="48792"/>
<dbReference type="Pumba" id="O43175"/>
<dbReference type="TopDownProteomics" id="O43175"/>
<dbReference type="Antibodypedia" id="3291">
    <property type="antibodies" value="484 antibodies from 35 providers"/>
</dbReference>
<dbReference type="DNASU" id="26227"/>
<dbReference type="Ensembl" id="ENST00000641023.2">
    <property type="protein sequence ID" value="ENSP00000493175.1"/>
    <property type="gene ID" value="ENSG00000092621.13"/>
</dbReference>
<dbReference type="Ensembl" id="ENST00000641597.1">
    <property type="protein sequence ID" value="ENSP00000493382.1"/>
    <property type="gene ID" value="ENSG00000092621.13"/>
</dbReference>
<dbReference type="GeneID" id="26227"/>
<dbReference type="KEGG" id="hsa:26227"/>
<dbReference type="MANE-Select" id="ENST00000641023.2">
    <property type="protein sequence ID" value="ENSP00000493175.1"/>
    <property type="RefSeq nucleotide sequence ID" value="NM_006623.4"/>
    <property type="RefSeq protein sequence ID" value="NP_006614.2"/>
</dbReference>
<dbReference type="UCSC" id="uc001ehz.4">
    <property type="organism name" value="human"/>
</dbReference>
<dbReference type="AGR" id="HGNC:8923"/>
<dbReference type="CTD" id="26227"/>
<dbReference type="DisGeNET" id="26227"/>
<dbReference type="GeneCards" id="PHGDH"/>
<dbReference type="GeneReviews" id="PHGDH"/>
<dbReference type="HGNC" id="HGNC:8923">
    <property type="gene designation" value="PHGDH"/>
</dbReference>
<dbReference type="HPA" id="ENSG00000092621">
    <property type="expression patterns" value="Low tissue specificity"/>
</dbReference>
<dbReference type="MalaCards" id="PHGDH"/>
<dbReference type="MIM" id="256520">
    <property type="type" value="phenotype"/>
</dbReference>
<dbReference type="MIM" id="601815">
    <property type="type" value="phenotype"/>
</dbReference>
<dbReference type="MIM" id="606879">
    <property type="type" value="gene"/>
</dbReference>
<dbReference type="neXtProt" id="NX_O43175"/>
<dbReference type="OpenTargets" id="ENSG00000092621"/>
<dbReference type="Orphanet" id="79351">
    <property type="disease" value="3-phosphoglycerate dehydrogenase deficiency, infantile/juvenile form"/>
</dbReference>
<dbReference type="Orphanet" id="583607">
    <property type="disease" value="Neu-Laxova syndrome due to 3-phosphoglycerate dehydrogenase deficiency"/>
</dbReference>
<dbReference type="PharmGKB" id="PA33264"/>
<dbReference type="VEuPathDB" id="HostDB:ENSG00000092621"/>
<dbReference type="eggNOG" id="KOG0068">
    <property type="taxonomic scope" value="Eukaryota"/>
</dbReference>
<dbReference type="GeneTree" id="ENSGT00940000155863"/>
<dbReference type="HOGENOM" id="CLU_019796_8_1_1"/>
<dbReference type="InParanoid" id="O43175"/>
<dbReference type="OMA" id="NIAGMQV"/>
<dbReference type="OrthoDB" id="1621027at2759"/>
<dbReference type="PAN-GO" id="O43175">
    <property type="GO annotations" value="1 GO annotation based on evolutionary models"/>
</dbReference>
<dbReference type="PhylomeDB" id="O43175"/>
<dbReference type="TreeFam" id="TF314548"/>
<dbReference type="BioCyc" id="MetaCyc:HS01776-MONOMER"/>
<dbReference type="BRENDA" id="1.1.1.95">
    <property type="organism ID" value="2681"/>
</dbReference>
<dbReference type="PathwayCommons" id="O43175"/>
<dbReference type="Reactome" id="R-HSA-977347">
    <property type="pathway name" value="Serine biosynthesis"/>
</dbReference>
<dbReference type="SABIO-RK" id="O43175"/>
<dbReference type="SignaLink" id="O43175"/>
<dbReference type="SIGNOR" id="O43175"/>
<dbReference type="UniPathway" id="UPA00135">
    <property type="reaction ID" value="UER00196"/>
</dbReference>
<dbReference type="BioGRID-ORCS" id="26227">
    <property type="hits" value="19 hits in 1178 CRISPR screens"/>
</dbReference>
<dbReference type="CD-CODE" id="91857CE7">
    <property type="entry name" value="Nucleolus"/>
</dbReference>
<dbReference type="CD-CODE" id="FB4E32DD">
    <property type="entry name" value="Presynaptic clusters and postsynaptic densities"/>
</dbReference>
<dbReference type="ChiTaRS" id="PHGDH">
    <property type="organism name" value="human"/>
</dbReference>
<dbReference type="EvolutionaryTrace" id="O43175"/>
<dbReference type="GeneWiki" id="Phosphoglycerate_dehydrogenase"/>
<dbReference type="GenomeRNAi" id="26227"/>
<dbReference type="Pharos" id="O43175">
    <property type="development level" value="Tchem"/>
</dbReference>
<dbReference type="PRO" id="PR:O43175"/>
<dbReference type="Proteomes" id="UP000005640">
    <property type="component" value="Chromosome 1"/>
</dbReference>
<dbReference type="RNAct" id="O43175">
    <property type="molecule type" value="protein"/>
</dbReference>
<dbReference type="Bgee" id="ENSG00000092621">
    <property type="expression patterns" value="Expressed in ventricular zone and 194 other cell types or tissues"/>
</dbReference>
<dbReference type="ExpressionAtlas" id="O43175">
    <property type="expression patterns" value="baseline and differential"/>
</dbReference>
<dbReference type="GO" id="GO:0005829">
    <property type="term" value="C:cytosol"/>
    <property type="evidence" value="ECO:0000304"/>
    <property type="project" value="Reactome"/>
</dbReference>
<dbReference type="GO" id="GO:0070062">
    <property type="term" value="C:extracellular exosome"/>
    <property type="evidence" value="ECO:0007005"/>
    <property type="project" value="UniProtKB"/>
</dbReference>
<dbReference type="GO" id="GO:0009055">
    <property type="term" value="F:electron transfer activity"/>
    <property type="evidence" value="ECO:0000304"/>
    <property type="project" value="UniProtKB"/>
</dbReference>
<dbReference type="GO" id="GO:0030060">
    <property type="term" value="F:L-malate dehydrogenase (NAD+) activity"/>
    <property type="evidence" value="ECO:0007669"/>
    <property type="project" value="UniProtKB-EC"/>
</dbReference>
<dbReference type="GO" id="GO:0051287">
    <property type="term" value="F:NAD binding"/>
    <property type="evidence" value="ECO:0007669"/>
    <property type="project" value="InterPro"/>
</dbReference>
<dbReference type="GO" id="GO:0004617">
    <property type="term" value="F:phosphoglycerate dehydrogenase activity"/>
    <property type="evidence" value="ECO:0000318"/>
    <property type="project" value="GO_Central"/>
</dbReference>
<dbReference type="GO" id="GO:0007420">
    <property type="term" value="P:brain development"/>
    <property type="evidence" value="ECO:0000304"/>
    <property type="project" value="ProtInc"/>
</dbReference>
<dbReference type="GO" id="GO:0070314">
    <property type="term" value="P:G1 to G0 transition"/>
    <property type="evidence" value="ECO:0007669"/>
    <property type="project" value="Ensembl"/>
</dbReference>
<dbReference type="GO" id="GO:0009448">
    <property type="term" value="P:gamma-aminobutyric acid metabolic process"/>
    <property type="evidence" value="ECO:0007669"/>
    <property type="project" value="Ensembl"/>
</dbReference>
<dbReference type="GO" id="GO:0021782">
    <property type="term" value="P:glial cell development"/>
    <property type="evidence" value="ECO:0007669"/>
    <property type="project" value="Ensembl"/>
</dbReference>
<dbReference type="GO" id="GO:0006541">
    <property type="term" value="P:glutamine metabolic process"/>
    <property type="evidence" value="ECO:0007669"/>
    <property type="project" value="Ensembl"/>
</dbReference>
<dbReference type="GO" id="GO:0006544">
    <property type="term" value="P:glycine metabolic process"/>
    <property type="evidence" value="ECO:0007669"/>
    <property type="project" value="Ensembl"/>
</dbReference>
<dbReference type="GO" id="GO:0006564">
    <property type="term" value="P:L-serine biosynthetic process"/>
    <property type="evidence" value="ECO:0007669"/>
    <property type="project" value="UniProtKB-KW"/>
</dbReference>
<dbReference type="GO" id="GO:0021915">
    <property type="term" value="P:neural tube development"/>
    <property type="evidence" value="ECO:0007669"/>
    <property type="project" value="Ensembl"/>
</dbReference>
<dbReference type="GO" id="GO:0031175">
    <property type="term" value="P:neuron projection development"/>
    <property type="evidence" value="ECO:0007669"/>
    <property type="project" value="Ensembl"/>
</dbReference>
<dbReference type="GO" id="GO:0010468">
    <property type="term" value="P:regulation of gene expression"/>
    <property type="evidence" value="ECO:0007669"/>
    <property type="project" value="Ensembl"/>
</dbReference>
<dbReference type="GO" id="GO:0021510">
    <property type="term" value="P:spinal cord development"/>
    <property type="evidence" value="ECO:0007669"/>
    <property type="project" value="Ensembl"/>
</dbReference>
<dbReference type="GO" id="GO:0019530">
    <property type="term" value="P:taurine metabolic process"/>
    <property type="evidence" value="ECO:0007669"/>
    <property type="project" value="Ensembl"/>
</dbReference>
<dbReference type="GO" id="GO:0006566">
    <property type="term" value="P:threonine metabolic process"/>
    <property type="evidence" value="ECO:0007669"/>
    <property type="project" value="Ensembl"/>
</dbReference>
<dbReference type="CDD" id="cd12173">
    <property type="entry name" value="PGDH_4"/>
    <property type="match status" value="1"/>
</dbReference>
<dbReference type="FunFam" id="3.30.1330.90:FF:000005">
    <property type="entry name" value="D-3-phosphoglycerate dehydrogenase"/>
    <property type="match status" value="1"/>
</dbReference>
<dbReference type="FunFam" id="3.40.50.720:FF:000021">
    <property type="entry name" value="D-3-phosphoglycerate dehydrogenase"/>
    <property type="match status" value="1"/>
</dbReference>
<dbReference type="FunFam" id="3.40.50.720:FF:000616">
    <property type="entry name" value="D-3-phosphoglycerate dehydrogenase 2 chloroplastic"/>
    <property type="match status" value="1"/>
</dbReference>
<dbReference type="Gene3D" id="3.30.1330.90">
    <property type="entry name" value="D-3-phosphoglycerate dehydrogenase, domain 3"/>
    <property type="match status" value="1"/>
</dbReference>
<dbReference type="Gene3D" id="3.40.50.720">
    <property type="entry name" value="NAD(P)-binding Rossmann-like Domain"/>
    <property type="match status" value="2"/>
</dbReference>
<dbReference type="InterPro" id="IPR029009">
    <property type="entry name" value="ASB_dom_sf"/>
</dbReference>
<dbReference type="InterPro" id="IPR006139">
    <property type="entry name" value="D-isomer_2_OHA_DH_cat_dom"/>
</dbReference>
<dbReference type="InterPro" id="IPR029753">
    <property type="entry name" value="D-isomer_DH_CS"/>
</dbReference>
<dbReference type="InterPro" id="IPR029752">
    <property type="entry name" value="D-isomer_DH_CS1"/>
</dbReference>
<dbReference type="InterPro" id="IPR006140">
    <property type="entry name" value="D-isomer_DH_NAD-bd"/>
</dbReference>
<dbReference type="InterPro" id="IPR036291">
    <property type="entry name" value="NAD(P)-bd_dom_sf"/>
</dbReference>
<dbReference type="InterPro" id="IPR006236">
    <property type="entry name" value="PGDH"/>
</dbReference>
<dbReference type="InterPro" id="IPR045626">
    <property type="entry name" value="PGDH_ASB_dom"/>
</dbReference>
<dbReference type="NCBIfam" id="TIGR01327">
    <property type="entry name" value="PGDH"/>
    <property type="match status" value="1"/>
</dbReference>
<dbReference type="PANTHER" id="PTHR42938:SF22">
    <property type="entry name" value="D-3-PHOSPHOGLYCERATE DEHYDROGENASE"/>
    <property type="match status" value="1"/>
</dbReference>
<dbReference type="PANTHER" id="PTHR42938">
    <property type="entry name" value="FORMATE DEHYDROGENASE 1"/>
    <property type="match status" value="1"/>
</dbReference>
<dbReference type="Pfam" id="PF00389">
    <property type="entry name" value="2-Hacid_dh"/>
    <property type="match status" value="1"/>
</dbReference>
<dbReference type="Pfam" id="PF02826">
    <property type="entry name" value="2-Hacid_dh_C"/>
    <property type="match status" value="1"/>
</dbReference>
<dbReference type="Pfam" id="PF19304">
    <property type="entry name" value="PGDH_inter"/>
    <property type="match status" value="1"/>
</dbReference>
<dbReference type="SUPFAM" id="SSF52283">
    <property type="entry name" value="Formate/glycerate dehydrogenase catalytic domain-like"/>
    <property type="match status" value="1"/>
</dbReference>
<dbReference type="SUPFAM" id="SSF51735">
    <property type="entry name" value="NAD(P)-binding Rossmann-fold domains"/>
    <property type="match status" value="1"/>
</dbReference>
<dbReference type="SUPFAM" id="SSF143548">
    <property type="entry name" value="Serine metabolism enzymes domain"/>
    <property type="match status" value="1"/>
</dbReference>
<dbReference type="PROSITE" id="PS00065">
    <property type="entry name" value="D_2_HYDROXYACID_DH_1"/>
    <property type="match status" value="1"/>
</dbReference>
<dbReference type="PROSITE" id="PS00670">
    <property type="entry name" value="D_2_HYDROXYACID_DH_2"/>
    <property type="match status" value="1"/>
</dbReference>
<dbReference type="PROSITE" id="PS00671">
    <property type="entry name" value="D_2_HYDROXYACID_DH_3"/>
    <property type="match status" value="1"/>
</dbReference>
<reference key="1">
    <citation type="journal article" date="2000" name="Gene">
        <title>Nucleotide sequence and differential expression of the human 3-phosphoglycerate dehydrogenase gene.</title>
        <authorList>
            <person name="Cho H.M."/>
            <person name="Jun D.Y."/>
            <person name="Bae M.A."/>
            <person name="Ahn J.D."/>
            <person name="Kim Y.H."/>
        </authorList>
    </citation>
    <scope>NUCLEOTIDE SEQUENCE [MRNA]</scope>
</reference>
<reference key="2">
    <citation type="journal article" date="2000" name="Am. J. Hum. Genet.">
        <title>Molecular characterization of 3-phosphoglycerate dehydrogenase deficiency -- a neurometabolic disorder associated with reduced L-serine biosynthesis.</title>
        <authorList>
            <person name="Klomp L.W.J."/>
            <person name="de Koning T.J."/>
            <person name="Malingre H.E.M."/>
            <person name="van Beurden E.A.C.M."/>
            <person name="Brink M."/>
            <person name="Opdam F.L."/>
            <person name="Duran M."/>
            <person name="Jaeken J."/>
            <person name="Pineda M."/>
            <person name="van Maldergem L."/>
            <person name="Poll-The B.T."/>
            <person name="van den Berg I.E.T."/>
            <person name="Berger R."/>
        </authorList>
    </citation>
    <scope>NUCLEOTIDE SEQUENCE [MRNA]</scope>
    <scope>VARIANTS PHGDHD MET-425 AND MET-490</scope>
</reference>
<reference key="3">
    <citation type="submission" date="2004-06" db="EMBL/GenBank/DDBJ databases">
        <title>Cloning of human full open reading frames in Gateway(TM) system entry vector (pDONR201).</title>
        <authorList>
            <person name="Ebert L."/>
            <person name="Schick M."/>
            <person name="Neubert P."/>
            <person name="Schatten R."/>
            <person name="Henze S."/>
            <person name="Korn B."/>
        </authorList>
    </citation>
    <scope>NUCLEOTIDE SEQUENCE [LARGE SCALE MRNA]</scope>
</reference>
<reference key="4">
    <citation type="journal article" date="2004" name="Nat. Genet.">
        <title>Complete sequencing and characterization of 21,243 full-length human cDNAs.</title>
        <authorList>
            <person name="Ota T."/>
            <person name="Suzuki Y."/>
            <person name="Nishikawa T."/>
            <person name="Otsuki T."/>
            <person name="Sugiyama T."/>
            <person name="Irie R."/>
            <person name="Wakamatsu A."/>
            <person name="Hayashi K."/>
            <person name="Sato H."/>
            <person name="Nagai K."/>
            <person name="Kimura K."/>
            <person name="Makita H."/>
            <person name="Sekine M."/>
            <person name="Obayashi M."/>
            <person name="Nishi T."/>
            <person name="Shibahara T."/>
            <person name="Tanaka T."/>
            <person name="Ishii S."/>
            <person name="Yamamoto J."/>
            <person name="Saito K."/>
            <person name="Kawai Y."/>
            <person name="Isono Y."/>
            <person name="Nakamura Y."/>
            <person name="Nagahari K."/>
            <person name="Murakami K."/>
            <person name="Yasuda T."/>
            <person name="Iwayanagi T."/>
            <person name="Wagatsuma M."/>
            <person name="Shiratori A."/>
            <person name="Sudo H."/>
            <person name="Hosoiri T."/>
            <person name="Kaku Y."/>
            <person name="Kodaira H."/>
            <person name="Kondo H."/>
            <person name="Sugawara M."/>
            <person name="Takahashi M."/>
            <person name="Kanda K."/>
            <person name="Yokoi T."/>
            <person name="Furuya T."/>
            <person name="Kikkawa E."/>
            <person name="Omura Y."/>
            <person name="Abe K."/>
            <person name="Kamihara K."/>
            <person name="Katsuta N."/>
            <person name="Sato K."/>
            <person name="Tanikawa M."/>
            <person name="Yamazaki M."/>
            <person name="Ninomiya K."/>
            <person name="Ishibashi T."/>
            <person name="Yamashita H."/>
            <person name="Murakawa K."/>
            <person name="Fujimori K."/>
            <person name="Tanai H."/>
            <person name="Kimata M."/>
            <person name="Watanabe M."/>
            <person name="Hiraoka S."/>
            <person name="Chiba Y."/>
            <person name="Ishida S."/>
            <person name="Ono Y."/>
            <person name="Takiguchi S."/>
            <person name="Watanabe S."/>
            <person name="Yosida M."/>
            <person name="Hotuta T."/>
            <person name="Kusano J."/>
            <person name="Kanehori K."/>
            <person name="Takahashi-Fujii A."/>
            <person name="Hara H."/>
            <person name="Tanase T.-O."/>
            <person name="Nomura Y."/>
            <person name="Togiya S."/>
            <person name="Komai F."/>
            <person name="Hara R."/>
            <person name="Takeuchi K."/>
            <person name="Arita M."/>
            <person name="Imose N."/>
            <person name="Musashino K."/>
            <person name="Yuuki H."/>
            <person name="Oshima A."/>
            <person name="Sasaki N."/>
            <person name="Aotsuka S."/>
            <person name="Yoshikawa Y."/>
            <person name="Matsunawa H."/>
            <person name="Ichihara T."/>
            <person name="Shiohata N."/>
            <person name="Sano S."/>
            <person name="Moriya S."/>
            <person name="Momiyama H."/>
            <person name="Satoh N."/>
            <person name="Takami S."/>
            <person name="Terashima Y."/>
            <person name="Suzuki O."/>
            <person name="Nakagawa S."/>
            <person name="Senoh A."/>
            <person name="Mizoguchi H."/>
            <person name="Goto Y."/>
            <person name="Shimizu F."/>
            <person name="Wakebe H."/>
            <person name="Hishigaki H."/>
            <person name="Watanabe T."/>
            <person name="Sugiyama A."/>
            <person name="Takemoto M."/>
            <person name="Kawakami B."/>
            <person name="Yamazaki M."/>
            <person name="Watanabe K."/>
            <person name="Kumagai A."/>
            <person name="Itakura S."/>
            <person name="Fukuzumi Y."/>
            <person name="Fujimori Y."/>
            <person name="Komiyama M."/>
            <person name="Tashiro H."/>
            <person name="Tanigami A."/>
            <person name="Fujiwara T."/>
            <person name="Ono T."/>
            <person name="Yamada K."/>
            <person name="Fujii Y."/>
            <person name="Ozaki K."/>
            <person name="Hirao M."/>
            <person name="Ohmori Y."/>
            <person name="Kawabata A."/>
            <person name="Hikiji T."/>
            <person name="Kobatake N."/>
            <person name="Inagaki H."/>
            <person name="Ikema Y."/>
            <person name="Okamoto S."/>
            <person name="Okitani R."/>
            <person name="Kawakami T."/>
            <person name="Noguchi S."/>
            <person name="Itoh T."/>
            <person name="Shigeta K."/>
            <person name="Senba T."/>
            <person name="Matsumura K."/>
            <person name="Nakajima Y."/>
            <person name="Mizuno T."/>
            <person name="Morinaga M."/>
            <person name="Sasaki M."/>
            <person name="Togashi T."/>
            <person name="Oyama M."/>
            <person name="Hata H."/>
            <person name="Watanabe M."/>
            <person name="Komatsu T."/>
            <person name="Mizushima-Sugano J."/>
            <person name="Satoh T."/>
            <person name="Shirai Y."/>
            <person name="Takahashi Y."/>
            <person name="Nakagawa K."/>
            <person name="Okumura K."/>
            <person name="Nagase T."/>
            <person name="Nomura N."/>
            <person name="Kikuchi H."/>
            <person name="Masuho Y."/>
            <person name="Yamashita R."/>
            <person name="Nakai K."/>
            <person name="Yada T."/>
            <person name="Nakamura Y."/>
            <person name="Ohara O."/>
            <person name="Isogai T."/>
            <person name="Sugano S."/>
        </authorList>
    </citation>
    <scope>NUCLEOTIDE SEQUENCE [LARGE SCALE MRNA]</scope>
</reference>
<reference key="5">
    <citation type="journal article" date="2006" name="Nature">
        <title>The DNA sequence and biological annotation of human chromosome 1.</title>
        <authorList>
            <person name="Gregory S.G."/>
            <person name="Barlow K.F."/>
            <person name="McLay K.E."/>
            <person name="Kaul R."/>
            <person name="Swarbreck D."/>
            <person name="Dunham A."/>
            <person name="Scott C.E."/>
            <person name="Howe K.L."/>
            <person name="Woodfine K."/>
            <person name="Spencer C.C.A."/>
            <person name="Jones M.C."/>
            <person name="Gillson C."/>
            <person name="Searle S."/>
            <person name="Zhou Y."/>
            <person name="Kokocinski F."/>
            <person name="McDonald L."/>
            <person name="Evans R."/>
            <person name="Phillips K."/>
            <person name="Atkinson A."/>
            <person name="Cooper R."/>
            <person name="Jones C."/>
            <person name="Hall R.E."/>
            <person name="Andrews T.D."/>
            <person name="Lloyd C."/>
            <person name="Ainscough R."/>
            <person name="Almeida J.P."/>
            <person name="Ambrose K.D."/>
            <person name="Anderson F."/>
            <person name="Andrew R.W."/>
            <person name="Ashwell R.I.S."/>
            <person name="Aubin K."/>
            <person name="Babbage A.K."/>
            <person name="Bagguley C.L."/>
            <person name="Bailey J."/>
            <person name="Beasley H."/>
            <person name="Bethel G."/>
            <person name="Bird C.P."/>
            <person name="Bray-Allen S."/>
            <person name="Brown J.Y."/>
            <person name="Brown A.J."/>
            <person name="Buckley D."/>
            <person name="Burton J."/>
            <person name="Bye J."/>
            <person name="Carder C."/>
            <person name="Chapman J.C."/>
            <person name="Clark S.Y."/>
            <person name="Clarke G."/>
            <person name="Clee C."/>
            <person name="Cobley V."/>
            <person name="Collier R.E."/>
            <person name="Corby N."/>
            <person name="Coville G.J."/>
            <person name="Davies J."/>
            <person name="Deadman R."/>
            <person name="Dunn M."/>
            <person name="Earthrowl M."/>
            <person name="Ellington A.G."/>
            <person name="Errington H."/>
            <person name="Frankish A."/>
            <person name="Frankland J."/>
            <person name="French L."/>
            <person name="Garner P."/>
            <person name="Garnett J."/>
            <person name="Gay L."/>
            <person name="Ghori M.R.J."/>
            <person name="Gibson R."/>
            <person name="Gilby L.M."/>
            <person name="Gillett W."/>
            <person name="Glithero R.J."/>
            <person name="Grafham D.V."/>
            <person name="Griffiths C."/>
            <person name="Griffiths-Jones S."/>
            <person name="Grocock R."/>
            <person name="Hammond S."/>
            <person name="Harrison E.S.I."/>
            <person name="Hart E."/>
            <person name="Haugen E."/>
            <person name="Heath P.D."/>
            <person name="Holmes S."/>
            <person name="Holt K."/>
            <person name="Howden P.J."/>
            <person name="Hunt A.R."/>
            <person name="Hunt S.E."/>
            <person name="Hunter G."/>
            <person name="Isherwood J."/>
            <person name="James R."/>
            <person name="Johnson C."/>
            <person name="Johnson D."/>
            <person name="Joy A."/>
            <person name="Kay M."/>
            <person name="Kershaw J.K."/>
            <person name="Kibukawa M."/>
            <person name="Kimberley A.M."/>
            <person name="King A."/>
            <person name="Knights A.J."/>
            <person name="Lad H."/>
            <person name="Laird G."/>
            <person name="Lawlor S."/>
            <person name="Leongamornlert D.A."/>
            <person name="Lloyd D.M."/>
            <person name="Loveland J."/>
            <person name="Lovell J."/>
            <person name="Lush M.J."/>
            <person name="Lyne R."/>
            <person name="Martin S."/>
            <person name="Mashreghi-Mohammadi M."/>
            <person name="Matthews L."/>
            <person name="Matthews N.S.W."/>
            <person name="McLaren S."/>
            <person name="Milne S."/>
            <person name="Mistry S."/>
            <person name="Moore M.J.F."/>
            <person name="Nickerson T."/>
            <person name="O'Dell C.N."/>
            <person name="Oliver K."/>
            <person name="Palmeiri A."/>
            <person name="Palmer S.A."/>
            <person name="Parker A."/>
            <person name="Patel D."/>
            <person name="Pearce A.V."/>
            <person name="Peck A.I."/>
            <person name="Pelan S."/>
            <person name="Phelps K."/>
            <person name="Phillimore B.J."/>
            <person name="Plumb R."/>
            <person name="Rajan J."/>
            <person name="Raymond C."/>
            <person name="Rouse G."/>
            <person name="Saenphimmachak C."/>
            <person name="Sehra H.K."/>
            <person name="Sheridan E."/>
            <person name="Shownkeen R."/>
            <person name="Sims S."/>
            <person name="Skuce C.D."/>
            <person name="Smith M."/>
            <person name="Steward C."/>
            <person name="Subramanian S."/>
            <person name="Sycamore N."/>
            <person name="Tracey A."/>
            <person name="Tromans A."/>
            <person name="Van Helmond Z."/>
            <person name="Wall M."/>
            <person name="Wallis J.M."/>
            <person name="White S."/>
            <person name="Whitehead S.L."/>
            <person name="Wilkinson J.E."/>
            <person name="Willey D.L."/>
            <person name="Williams H."/>
            <person name="Wilming L."/>
            <person name="Wray P.W."/>
            <person name="Wu Z."/>
            <person name="Coulson A."/>
            <person name="Vaudin M."/>
            <person name="Sulston J.E."/>
            <person name="Durbin R.M."/>
            <person name="Hubbard T."/>
            <person name="Wooster R."/>
            <person name="Dunham I."/>
            <person name="Carter N.P."/>
            <person name="McVean G."/>
            <person name="Ross M.T."/>
            <person name="Harrow J."/>
            <person name="Olson M.V."/>
            <person name="Beck S."/>
            <person name="Rogers J."/>
            <person name="Bentley D.R."/>
        </authorList>
    </citation>
    <scope>NUCLEOTIDE SEQUENCE [LARGE SCALE GENOMIC DNA]</scope>
</reference>
<reference key="6">
    <citation type="submission" date="2005-07" db="EMBL/GenBank/DDBJ databases">
        <authorList>
            <person name="Mural R.J."/>
            <person name="Istrail S."/>
            <person name="Sutton G.G."/>
            <person name="Florea L."/>
            <person name="Halpern A.L."/>
            <person name="Mobarry C.M."/>
            <person name="Lippert R."/>
            <person name="Walenz B."/>
            <person name="Shatkay H."/>
            <person name="Dew I."/>
            <person name="Miller J.R."/>
            <person name="Flanigan M.J."/>
            <person name="Edwards N.J."/>
            <person name="Bolanos R."/>
            <person name="Fasulo D."/>
            <person name="Halldorsson B.V."/>
            <person name="Hannenhalli S."/>
            <person name="Turner R."/>
            <person name="Yooseph S."/>
            <person name="Lu F."/>
            <person name="Nusskern D.R."/>
            <person name="Shue B.C."/>
            <person name="Zheng X.H."/>
            <person name="Zhong F."/>
            <person name="Delcher A.L."/>
            <person name="Huson D.H."/>
            <person name="Kravitz S.A."/>
            <person name="Mouchard L."/>
            <person name="Reinert K."/>
            <person name="Remington K.A."/>
            <person name="Clark A.G."/>
            <person name="Waterman M.S."/>
            <person name="Eichler E.E."/>
            <person name="Adams M.D."/>
            <person name="Hunkapiller M.W."/>
            <person name="Myers E.W."/>
            <person name="Venter J.C."/>
        </authorList>
    </citation>
    <scope>NUCLEOTIDE SEQUENCE [LARGE SCALE GENOMIC DNA]</scope>
</reference>
<reference key="7">
    <citation type="journal article" date="2004" name="Genome Res.">
        <title>The status, quality, and expansion of the NIH full-length cDNA project: the Mammalian Gene Collection (MGC).</title>
        <authorList>
            <consortium name="The MGC Project Team"/>
        </authorList>
    </citation>
    <scope>NUCLEOTIDE SEQUENCE [LARGE SCALE MRNA]</scope>
    <source>
        <tissue>Brain</tissue>
        <tissue>Lung</tissue>
        <tissue>Muscle</tissue>
    </source>
</reference>
<reference key="8">
    <citation type="submission" date="2010-01" db="UniProtKB">
        <authorList>
            <person name="Bienvenut W.V."/>
        </authorList>
    </citation>
    <scope>PROTEIN SEQUENCE OF 2-54; 59-69; 76-119; 138-155; 237-289; 295-308; 352-380; 385-394; 462-491 AND 523-533</scope>
    <scope>CLEAVAGE OF INITIATOR METHIONINE</scope>
    <scope>ACETYLATION AT ALA-2</scope>
    <scope>IDENTIFICATION BY MASS SPECTROMETRY</scope>
    <source>
        <tissue>B-cell lymphoma</tissue>
        <tissue>Ovarian carcinoma</tissue>
    </source>
</reference>
<reference key="9">
    <citation type="submission" date="2008-12" db="UniProtKB">
        <authorList>
            <person name="Lubec G."/>
            <person name="Chen W.-Q."/>
            <person name="Sun Y."/>
        </authorList>
    </citation>
    <scope>PROTEIN SEQUENCE OF 9-20; 22-33; 76-90; 248-268 AND 271-289</scope>
    <source>
        <tissue>Fetal brain cortex</tissue>
    </source>
</reference>
<reference key="10">
    <citation type="journal article" date="2002" name="J. Biol. Chem.">
        <title>V490M, a common mutation in 3-phosphoglycerate dehydrogenase deficiency, causes enzyme deficiency by decreasing the yield of mature enzyme.</title>
        <authorList>
            <person name="Pind S."/>
            <person name="Slominski E."/>
            <person name="Mauthe J."/>
            <person name="Pearlman K."/>
            <person name="Swoboda K.J."/>
            <person name="Wilkins J.A."/>
            <person name="Sauder P."/>
            <person name="Natowicz M.R."/>
        </authorList>
    </citation>
    <scope>CATALYTIC ACTIVITY</scope>
    <scope>VARIANT MET-490</scope>
</reference>
<reference key="11">
    <citation type="journal article" date="2003" name="Nature">
        <title>Proteomic characterization of the human centrosome by protein correlation profiling.</title>
        <authorList>
            <person name="Andersen J.S."/>
            <person name="Wilkinson C.J."/>
            <person name="Mayor T."/>
            <person name="Mortensen P."/>
            <person name="Nigg E.A."/>
            <person name="Mann M."/>
        </authorList>
    </citation>
    <scope>IDENTIFICATION BY MASS SPECTROMETRY</scope>
    <source>
        <tissue>Lymphoblast</tissue>
    </source>
</reference>
<reference key="12">
    <citation type="journal article" date="2006" name="Steroids">
        <title>Identification of novel proteins induced by estradiol, 4-hydroxytamoxifen and acolbifene in T47D breast cancer cells.</title>
        <authorList>
            <person name="Al-Dhaheri M.H."/>
            <person name="Shah Y.M."/>
            <person name="Basrur V."/>
            <person name="Pind S."/>
            <person name="Rowan B.G."/>
        </authorList>
    </citation>
    <scope>IDENTIFICATION BY MASS SPECTROMETRY</scope>
    <scope>INDUCTION BY 17-BETA-ESTRADIOL AND 4-HYDROXYTAMOXIFEN</scope>
</reference>
<reference key="13">
    <citation type="journal article" date="2008" name="Gene">
        <title>Positive regulation of promoter activity of human 3-phosphoglycerate dehydrogenase (PHGDH) gene is mediated by transcription factors Sp1 and NF-Y.</title>
        <authorList>
            <person name="Jun D.Y."/>
            <person name="Park H.S."/>
            <person name="Lee J.Y."/>
            <person name="Baek J.Y."/>
            <person name="Park H.-K."/>
            <person name="Fukui K."/>
            <person name="Kim Y.H."/>
        </authorList>
    </citation>
    <scope>INDUCTION BY SP1 AND NF-Y</scope>
</reference>
<reference key="14">
    <citation type="journal article" date="2008" name="Proc. Natl. Acad. Sci. U.S.A.">
        <title>A quantitative atlas of mitotic phosphorylation.</title>
        <authorList>
            <person name="Dephoure N."/>
            <person name="Zhou C."/>
            <person name="Villen J."/>
            <person name="Beausoleil S.A."/>
            <person name="Bakalarski C.E."/>
            <person name="Elledge S.J."/>
            <person name="Gygi S.P."/>
        </authorList>
    </citation>
    <scope>IDENTIFICATION BY MASS SPECTROMETRY [LARGE SCALE ANALYSIS]</scope>
    <source>
        <tissue>Cervix carcinoma</tissue>
    </source>
</reference>
<reference key="15">
    <citation type="journal article" date="2011" name="BMC Syst. Biol.">
        <title>Initial characterization of the human central proteome.</title>
        <authorList>
            <person name="Burkard T.R."/>
            <person name="Planyavsky M."/>
            <person name="Kaupe I."/>
            <person name="Breitwieser F.P."/>
            <person name="Buerckstuemmer T."/>
            <person name="Bennett K.L."/>
            <person name="Superti-Furga G."/>
            <person name="Colinge J."/>
        </authorList>
    </citation>
    <scope>IDENTIFICATION BY MASS SPECTROMETRY [LARGE SCALE ANALYSIS]</scope>
</reference>
<reference key="16">
    <citation type="journal article" date="2013" name="J. Proteome Res.">
        <title>Toward a comprehensive characterization of a human cancer cell phosphoproteome.</title>
        <authorList>
            <person name="Zhou H."/>
            <person name="Di Palma S."/>
            <person name="Preisinger C."/>
            <person name="Peng M."/>
            <person name="Polat A.N."/>
            <person name="Heck A.J."/>
            <person name="Mohammed S."/>
        </authorList>
    </citation>
    <scope>PHOSPHORYLATION [LARGE SCALE ANALYSIS] AT THR-78</scope>
    <scope>IDENTIFICATION BY MASS SPECTROMETRY [LARGE SCALE ANALYSIS]</scope>
    <source>
        <tissue>Cervix carcinoma</tissue>
    </source>
</reference>
<reference key="17">
    <citation type="journal article" date="2014" name="J. Proteomics">
        <title>An enzyme assisted RP-RPLC approach for in-depth analysis of human liver phosphoproteome.</title>
        <authorList>
            <person name="Bian Y."/>
            <person name="Song C."/>
            <person name="Cheng K."/>
            <person name="Dong M."/>
            <person name="Wang F."/>
            <person name="Huang J."/>
            <person name="Sun D."/>
            <person name="Wang L."/>
            <person name="Ye M."/>
            <person name="Zou H."/>
        </authorList>
    </citation>
    <scope>PHOSPHORYLATION [LARGE SCALE ANALYSIS] AT SER-14 AND THR-78</scope>
    <scope>IDENTIFICATION BY MASS SPECTROMETRY [LARGE SCALE ANALYSIS]</scope>
    <source>
        <tissue>Liver</tissue>
    </source>
</reference>
<reference key="18">
    <citation type="journal article" date="2014" name="Proc. Natl. Acad. Sci. U.S.A.">
        <title>Mapping of SUMO sites and analysis of SUMOylation changes induced by external stimuli.</title>
        <authorList>
            <person name="Impens F."/>
            <person name="Radoshevich L."/>
            <person name="Cossart P."/>
            <person name="Ribet D."/>
        </authorList>
    </citation>
    <scope>SUMOYLATION [LARGE SCALE ANALYSIS] AT LYS-21</scope>
    <scope>IDENTIFICATION BY MASS SPECTROMETRY [LARGE SCALE ANALYSIS]</scope>
</reference>
<reference key="19">
    <citation type="journal article" date="2015" name="ACS Chem. Biol.">
        <title>Human phosphoglycerate dehydrogenase produces the oncometabolite D-2-hydroxyglutarate.</title>
        <authorList>
            <person name="Fan J."/>
            <person name="Teng X."/>
            <person name="Liu L."/>
            <person name="Mattaini K.R."/>
            <person name="Looper R.E."/>
            <person name="Vander Heiden M.G."/>
            <person name="Rabinowitz J.D."/>
        </authorList>
    </citation>
    <scope>FUNCTION</scope>
    <scope>CATALYTIC ACTIVITY</scope>
    <scope>BIOPHYSICOCHEMICAL PROPERTIES</scope>
</reference>
<reference key="20">
    <citation type="journal article" date="2015" name="Proteomics">
        <title>N-terminome analysis of the human mitochondrial proteome.</title>
        <authorList>
            <person name="Vaca Jacome A.S."/>
            <person name="Rabilloud T."/>
            <person name="Schaeffer-Reiss C."/>
            <person name="Rompais M."/>
            <person name="Ayoub D."/>
            <person name="Lane L."/>
            <person name="Bairoch A."/>
            <person name="Van Dorsselaer A."/>
            <person name="Carapito C."/>
        </authorList>
    </citation>
    <scope>IDENTIFICATION BY MASS SPECTROMETRY [LARGE SCALE ANALYSIS]</scope>
</reference>
<reference key="21">
    <citation type="submission" date="2009-02" db="PDB data bank">
        <title>Crystal structure of human 3-phosphoglycerate dehydrogenase.</title>
        <authorList>
            <consortium name="Structural genomics consortium (SGC)"/>
        </authorList>
    </citation>
    <scope>X-RAY CRYSTALLOGRAPHY (1.7 ANGSTROMS) OF 4-314 IN COMPLEX WITH NAD AND SUBSTRATE</scope>
</reference>
<reference key="22">
    <citation type="journal article" date="2009" name="Hum. Mutat.">
        <title>Novel mutations in 3-phosphoglycerate dehydrogenase (PHGDH) are distributed throughout the protein and result in altered enzyme kinetics.</title>
        <authorList>
            <person name="Tabatabaie L."/>
            <person name="de Koning T.J."/>
            <person name="Geboers A.J.J.M."/>
            <person name="van den Berg I.E.T."/>
            <person name="Berger R."/>
            <person name="Klomp L.W.J."/>
        </authorList>
    </citation>
    <scope>VARIANTS PHGDHD TRP-135; MET-261; THR-373 AND SER-377</scope>
    <scope>CHARACTERIZATION OF VARIANTS PHGDHD TRP-135; MET-261; THR-373; SER-377; MET-425 AND MET-490</scope>
    <scope>BIOPHYSICOCHEMICAL PROPERTIES</scope>
</reference>
<reference key="23">
    <citation type="journal article" date="2014" name="Am. J. Hum. Genet.">
        <title>Neu-Laxova syndrome, an inborn error of serine metabolism, is caused by mutations in PHGDH.</title>
        <authorList>
            <person name="Shaheen R."/>
            <person name="Rahbeeni Z."/>
            <person name="Alhashem A."/>
            <person name="Faqeih E."/>
            <person name="Zhao Q."/>
            <person name="Xiong Y."/>
            <person name="Almoisheer A."/>
            <person name="Al-Qattan S.M."/>
            <person name="Almadani H.A."/>
            <person name="Al-Onazi N."/>
            <person name="Al-Baqawi B.S."/>
            <person name="Saleh M.A."/>
            <person name="Alkuraya F.S."/>
        </authorList>
    </citation>
    <scope>INVOLVEMENT IN NLS1</scope>
    <scope>VARIANTS NLS1 ARG-140 AND GLN-163</scope>
</reference>
<protein>
    <recommendedName>
        <fullName>D-3-phosphoglycerate dehydrogenase</fullName>
        <shortName>3-PGDH</shortName>
        <ecNumber evidence="5">1.1.1.95</ecNumber>
    </recommendedName>
    <alternativeName>
        <fullName evidence="13">2-oxoglutarate reductase</fullName>
        <ecNumber evidence="10">1.1.1.399</ecNumber>
    </alternativeName>
    <alternativeName>
        <fullName evidence="13">Malate dehydrogenase</fullName>
        <ecNumber evidence="10">1.1.1.37</ecNumber>
    </alternativeName>
</protein>
<gene>
    <name type="primary">PHGDH</name>
    <name type="synonym">PGDH3</name>
</gene>
<organism>
    <name type="scientific">Homo sapiens</name>
    <name type="common">Human</name>
    <dbReference type="NCBI Taxonomy" id="9606"/>
    <lineage>
        <taxon>Eukaryota</taxon>
        <taxon>Metazoa</taxon>
        <taxon>Chordata</taxon>
        <taxon>Craniata</taxon>
        <taxon>Vertebrata</taxon>
        <taxon>Euteleostomi</taxon>
        <taxon>Mammalia</taxon>
        <taxon>Eutheria</taxon>
        <taxon>Euarchontoglires</taxon>
        <taxon>Primates</taxon>
        <taxon>Haplorrhini</taxon>
        <taxon>Catarrhini</taxon>
        <taxon>Hominidae</taxon>
        <taxon>Homo</taxon>
    </lineage>
</organism>
<name>SERA_HUMAN</name>
<proteinExistence type="evidence at protein level"/>
<keyword id="KW-0002">3D-structure</keyword>
<keyword id="KW-0007">Acetylation</keyword>
<keyword id="KW-0028">Amino-acid biosynthesis</keyword>
<keyword id="KW-0903">Direct protein sequencing</keyword>
<keyword id="KW-0225">Disease variant</keyword>
<keyword id="KW-1017">Isopeptide bond</keyword>
<keyword id="KW-0520">NAD</keyword>
<keyword id="KW-0560">Oxidoreductase</keyword>
<keyword id="KW-0597">Phosphoprotein</keyword>
<keyword id="KW-1267">Proteomics identification</keyword>
<keyword id="KW-1185">Reference proteome</keyword>
<keyword id="KW-0718">Serine biosynthesis</keyword>
<keyword id="KW-0832">Ubl conjugation</keyword>